<sequence length="517" mass="56381">MLRAAARFGPRLGRRLLSAAATQAVPAPNQQPEVFCNQIFINNEWHDAVSRKTFPTVNPSTGEVICQVAEGDKEDVDKAVKAARAAFQLGSPWRRMDASHRGRLLNRLADLIERDRTYLAALETLDNGKPYVISYLVDLDMVLKCLRYYAGWADKYHGKTIPIDGDFFSYTRHEPVGVCGQIIPWNFPLLMQAWKLGPALATGNVVVMKVAEQTPLTALYVANLIKEAGFPPGVVNIVPGFGPTAGAAIASHEDVDKVAFTGSTEIGRVIQVAAGSSNLKRVTLELGGKSPNIIMSDADMDWAVEQAHFALFFNQGQCCCAGSRTFVQEDIYDEFVERSVARAKSRVVGNPFDSKTEQGPQVDETQFKKILGYINTGKQEGAKLLCGGGIAADRGYFIQPTVFGDVQDGMTIAKEEIFGPVMQILKFKTIEEVVGRANNSTYGLAAAVFTKDLDKANYLSQALQAGTVWVNCYDVFGAQSPFGGYKMSGSGRELGEYGLQAYTEVKTVTVKVPQKNS</sequence>
<organism>
    <name type="scientific">Homo sapiens</name>
    <name type="common">Human</name>
    <dbReference type="NCBI Taxonomy" id="9606"/>
    <lineage>
        <taxon>Eukaryota</taxon>
        <taxon>Metazoa</taxon>
        <taxon>Chordata</taxon>
        <taxon>Craniata</taxon>
        <taxon>Vertebrata</taxon>
        <taxon>Euteleostomi</taxon>
        <taxon>Mammalia</taxon>
        <taxon>Eutheria</taxon>
        <taxon>Euarchontoglires</taxon>
        <taxon>Primates</taxon>
        <taxon>Haplorrhini</taxon>
        <taxon>Catarrhini</taxon>
        <taxon>Hominidae</taxon>
        <taxon>Homo</taxon>
    </lineage>
</organism>
<proteinExistence type="evidence at protein level"/>
<protein>
    <recommendedName>
        <fullName>Aldehyde dehydrogenase, mitochondrial</fullName>
        <ecNumber>1.2.1.3</ecNumber>
    </recommendedName>
    <alternativeName>
        <fullName>ALDH class 2</fullName>
    </alternativeName>
    <alternativeName>
        <fullName>ALDH-E2</fullName>
    </alternativeName>
    <alternativeName>
        <fullName>ALDHI</fullName>
    </alternativeName>
</protein>
<comment type="function">
    <text evidence="4">Required for clearance of cellular formaldehyde, a cytotoxic and carcinogenic metabolite that induces DNA damage.</text>
</comment>
<comment type="catalytic activity">
    <reaction>
        <text>an aldehyde + NAD(+) + H2O = a carboxylate + NADH + 2 H(+)</text>
        <dbReference type="Rhea" id="RHEA:16185"/>
        <dbReference type="ChEBI" id="CHEBI:15377"/>
        <dbReference type="ChEBI" id="CHEBI:15378"/>
        <dbReference type="ChEBI" id="CHEBI:17478"/>
        <dbReference type="ChEBI" id="CHEBI:29067"/>
        <dbReference type="ChEBI" id="CHEBI:57540"/>
        <dbReference type="ChEBI" id="CHEBI:57945"/>
        <dbReference type="EC" id="1.2.1.3"/>
    </reaction>
</comment>
<comment type="pathway">
    <text>Alcohol metabolism; ethanol degradation; acetate from ethanol: step 2/2.</text>
</comment>
<comment type="subunit">
    <text>Homotetramer.</text>
</comment>
<comment type="subcellular location">
    <subcellularLocation>
        <location>Mitochondrion matrix</location>
    </subcellularLocation>
</comment>
<comment type="alternative products">
    <event type="alternative splicing"/>
    <isoform>
        <id>P05091-1</id>
        <name>1</name>
        <sequence type="displayed"/>
    </isoform>
    <isoform>
        <id>P05091-2</id>
        <name>2</name>
        <sequence type="described" ref="VSP_046715"/>
    </isoform>
</comment>
<comment type="PTM">
    <text evidence="6">In response to mitochondrial stress, the precursor protein is ubiquitinated by the SIFI complex in the cytoplasm before mitochondrial import, leading to its degradation (PubMed:38297121). Within the SIFI complex, UBR4 initiates ubiquitin chain that are further elongated or branched by KCMF1 (PubMed:38297121).</text>
</comment>
<comment type="polymorphism">
    <text evidence="8">Genetic variation in ALDH2 is responsible for individual differences in responses to drinking alcohol [MIM:610251]. Allele ALDH2*2 is associated with a very high incidence of acute alcohol intoxication in Orientals and South American Indians, as compared to Caucasians.</text>
</comment>
<comment type="disease" evidence="4">
    <disease id="DI-06008">
        <name>AMED syndrome, digenic</name>
        <acronym>AMEDS</acronym>
        <description>A form of bone marrow failure syndrome, a heterogeneous group of life-threatening disorders characterized by hematopoietic defects in association with a range of variable extra-hematopoietic manifestations. AMEDS is an autosomal recessive, digenic form characterized by childhood onset of bone marrow failure resulting in aplastic anemia, in association with global developmental delay, intellectual disability, and poor overall growth with short stature.</description>
        <dbReference type="MIM" id="619151"/>
    </disease>
    <text evidence="4">The disease is caused by variants affecting distinct genetic loci, including the gene represented in this entry. AMEDS patients carry ADH5 biallelic variants and homozygous or heterozygous ALDH2 variant p.Glu504Lys, affecting protein activity. Cellular and animal studies demonstrate that the simultaneous loss of ALDH2 and ADH5 activities leads to an increase of cellular formaldehyde sensitivity and multisystem abnormalities including hematopoietic failure.</text>
</comment>
<comment type="similarity">
    <text evidence="10">Belongs to the aldehyde dehydrogenase family.</text>
</comment>
<comment type="sequence caution" evidence="10">
    <conflict type="frameshift">
        <sequence resource="EMBL-CDS" id="AAA62825"/>
    </conflict>
</comment>
<comment type="sequence caution" evidence="10">
    <conflict type="frameshift">
        <sequence resource="EMBL-CDS" id="CAA68290"/>
    </conflict>
</comment>
<comment type="sequence caution" evidence="10">
    <conflict type="miscellaneous discrepancy">
        <sequence resource="EMBL-CDS" id="CAA68290"/>
    </conflict>
</comment>
<comment type="online information" name="Atlas of Genetics and Cytogenetics in Oncology and Haematology">
    <link uri="https://atlasgeneticsoncology.org/gene/250/ALDH2"/>
</comment>
<dbReference type="EC" id="1.2.1.3"/>
<dbReference type="EMBL" id="X05409">
    <property type="protein sequence ID" value="CAA28990.1"/>
    <property type="molecule type" value="mRNA"/>
</dbReference>
<dbReference type="EMBL" id="Y00109">
    <property type="protein sequence ID" value="CAA68290.1"/>
    <property type="status" value="ALT_SEQ"/>
    <property type="molecule type" value="mRNA"/>
</dbReference>
<dbReference type="EMBL" id="M20456">
    <property type="protein sequence ID" value="AAA51693.1"/>
    <property type="molecule type" value="Genomic_DNA"/>
</dbReference>
<dbReference type="EMBL" id="M20444">
    <property type="protein sequence ID" value="AAA51693.1"/>
    <property type="status" value="JOINED"/>
    <property type="molecule type" value="Genomic_DNA"/>
</dbReference>
<dbReference type="EMBL" id="M20445">
    <property type="protein sequence ID" value="AAA51693.1"/>
    <property type="status" value="JOINED"/>
    <property type="molecule type" value="Genomic_DNA"/>
</dbReference>
<dbReference type="EMBL" id="M20446">
    <property type="protein sequence ID" value="AAA51693.1"/>
    <property type="status" value="JOINED"/>
    <property type="molecule type" value="Genomic_DNA"/>
</dbReference>
<dbReference type="EMBL" id="M20447">
    <property type="protein sequence ID" value="AAA51693.1"/>
    <property type="status" value="JOINED"/>
    <property type="molecule type" value="Genomic_DNA"/>
</dbReference>
<dbReference type="EMBL" id="M20448">
    <property type="protein sequence ID" value="AAA51693.1"/>
    <property type="status" value="JOINED"/>
    <property type="molecule type" value="Genomic_DNA"/>
</dbReference>
<dbReference type="EMBL" id="M20449">
    <property type="protein sequence ID" value="AAA51693.1"/>
    <property type="status" value="JOINED"/>
    <property type="molecule type" value="Genomic_DNA"/>
</dbReference>
<dbReference type="EMBL" id="M20450">
    <property type="protein sequence ID" value="AAA51693.1"/>
    <property type="status" value="JOINED"/>
    <property type="molecule type" value="Genomic_DNA"/>
</dbReference>
<dbReference type="EMBL" id="M20451">
    <property type="protein sequence ID" value="AAA51693.1"/>
    <property type="status" value="JOINED"/>
    <property type="molecule type" value="Genomic_DNA"/>
</dbReference>
<dbReference type="EMBL" id="M20452">
    <property type="protein sequence ID" value="AAA51693.1"/>
    <property type="status" value="JOINED"/>
    <property type="molecule type" value="Genomic_DNA"/>
</dbReference>
<dbReference type="EMBL" id="M20453">
    <property type="protein sequence ID" value="AAA51693.1"/>
    <property type="status" value="JOINED"/>
    <property type="molecule type" value="Genomic_DNA"/>
</dbReference>
<dbReference type="EMBL" id="M20454">
    <property type="protein sequence ID" value="AAA51693.1"/>
    <property type="status" value="JOINED"/>
    <property type="molecule type" value="Genomic_DNA"/>
</dbReference>
<dbReference type="EMBL" id="AY621070">
    <property type="protein sequence ID" value="AAT41621.1"/>
    <property type="molecule type" value="mRNA"/>
</dbReference>
<dbReference type="EMBL" id="CR456991">
    <property type="protein sequence ID" value="CAG33272.1"/>
    <property type="molecule type" value="mRNA"/>
</dbReference>
<dbReference type="EMBL" id="AK301375">
    <property type="protein sequence ID" value="BAG62916.1"/>
    <property type="molecule type" value="mRNA"/>
</dbReference>
<dbReference type="EMBL" id="AC002996">
    <property type="status" value="NOT_ANNOTATED_CDS"/>
    <property type="molecule type" value="Genomic_DNA"/>
</dbReference>
<dbReference type="EMBL" id="AC003029">
    <property type="status" value="NOT_ANNOTATED_CDS"/>
    <property type="molecule type" value="Genomic_DNA"/>
</dbReference>
<dbReference type="EMBL" id="BC002967">
    <property type="protein sequence ID" value="AAH02967.1"/>
    <property type="molecule type" value="mRNA"/>
</dbReference>
<dbReference type="EMBL" id="BC071839">
    <property type="protein sequence ID" value="AAH71839.1"/>
    <property type="molecule type" value="mRNA"/>
</dbReference>
<dbReference type="EMBL" id="K03001">
    <property type="protein sequence ID" value="AAB59500.1"/>
    <property type="molecule type" value="mRNA"/>
</dbReference>
<dbReference type="EMBL" id="M26760">
    <property type="protein sequence ID" value="AAA51694.1"/>
    <property type="molecule type" value="mRNA"/>
</dbReference>
<dbReference type="EMBL" id="M54931">
    <property type="protein sequence ID" value="AAA62825.1"/>
    <property type="status" value="ALT_FRAME"/>
    <property type="molecule type" value="mRNA"/>
</dbReference>
<dbReference type="CCDS" id="CCDS55885.1">
    <molecule id="P05091-2"/>
</dbReference>
<dbReference type="CCDS" id="CCDS9155.1">
    <molecule id="P05091-1"/>
</dbReference>
<dbReference type="PIR" id="A29975">
    <property type="entry name" value="DEHUE2"/>
</dbReference>
<dbReference type="RefSeq" id="NP_000681.2">
    <molecule id="P05091-1"/>
    <property type="nucleotide sequence ID" value="NM_000690.3"/>
</dbReference>
<dbReference type="RefSeq" id="NP_001191818.1">
    <molecule id="P05091-2"/>
    <property type="nucleotide sequence ID" value="NM_001204889.2"/>
</dbReference>
<dbReference type="PDB" id="1CW3">
    <property type="method" value="X-ray"/>
    <property type="resolution" value="2.58 A"/>
    <property type="chains" value="A/B/C/D/E/F/G/H=24-517"/>
</dbReference>
<dbReference type="PDB" id="1NZW">
    <property type="method" value="X-ray"/>
    <property type="resolution" value="2.65 A"/>
    <property type="chains" value="A/B/C/D/E/F/G/H=18-517"/>
</dbReference>
<dbReference type="PDB" id="1NZX">
    <property type="method" value="X-ray"/>
    <property type="resolution" value="2.45 A"/>
    <property type="chains" value="A/B/C/D/E/F/G/H=18-517"/>
</dbReference>
<dbReference type="PDB" id="1NZZ">
    <property type="method" value="X-ray"/>
    <property type="resolution" value="2.45 A"/>
    <property type="chains" value="A/B/C/D/E/F/G/H=18-517"/>
</dbReference>
<dbReference type="PDB" id="1O00">
    <property type="method" value="X-ray"/>
    <property type="resolution" value="2.60 A"/>
    <property type="chains" value="A/B/C/D/E/F/G/H=18-517"/>
</dbReference>
<dbReference type="PDB" id="1O01">
    <property type="method" value="X-ray"/>
    <property type="resolution" value="2.15 A"/>
    <property type="chains" value="A/B/C/D/E/F/G/H=18-517"/>
</dbReference>
<dbReference type="PDB" id="1O02">
    <property type="method" value="X-ray"/>
    <property type="resolution" value="1.90 A"/>
    <property type="chains" value="A/B/C/D/E/F/G/H=18-517"/>
</dbReference>
<dbReference type="PDB" id="1O04">
    <property type="method" value="X-ray"/>
    <property type="resolution" value="1.42 A"/>
    <property type="chains" value="A/B/C/D/E/F/G/H=18-517"/>
</dbReference>
<dbReference type="PDB" id="1O05">
    <property type="method" value="X-ray"/>
    <property type="resolution" value="2.25 A"/>
    <property type="chains" value="A/B/C/D/E/F/G/H=18-517"/>
</dbReference>
<dbReference type="PDB" id="1ZUM">
    <property type="method" value="X-ray"/>
    <property type="resolution" value="2.10 A"/>
    <property type="chains" value="A/B/C/D/E/F/G/H/I/J/K/L=18-517"/>
</dbReference>
<dbReference type="PDB" id="2ONM">
    <property type="method" value="X-ray"/>
    <property type="resolution" value="2.50 A"/>
    <property type="chains" value="A/B/C/D/E/F/G/H/I/J/K/L=18-517"/>
</dbReference>
<dbReference type="PDB" id="2ONN">
    <property type="method" value="X-ray"/>
    <property type="resolution" value="2.75 A"/>
    <property type="chains" value="A/B/C/D/E/F/G/H=18-517"/>
</dbReference>
<dbReference type="PDB" id="2ONO">
    <property type="method" value="X-ray"/>
    <property type="resolution" value="2.15 A"/>
    <property type="chains" value="A/B/C/D/E/F/G/H=18-517"/>
</dbReference>
<dbReference type="PDB" id="2ONP">
    <property type="method" value="X-ray"/>
    <property type="resolution" value="2.00 A"/>
    <property type="chains" value="A/B/C/D/E/F/G/H=18-517"/>
</dbReference>
<dbReference type="PDB" id="2VLE">
    <property type="method" value="X-ray"/>
    <property type="resolution" value="2.40 A"/>
    <property type="chains" value="A/B/C/D/E/F/G/H=24-517"/>
</dbReference>
<dbReference type="PDB" id="3INJ">
    <property type="method" value="X-ray"/>
    <property type="resolution" value="1.69 A"/>
    <property type="chains" value="A/B/C/D/E/F/G/H=18-517"/>
</dbReference>
<dbReference type="PDB" id="3INL">
    <property type="method" value="X-ray"/>
    <property type="resolution" value="1.86 A"/>
    <property type="chains" value="A/B/C/D/E/F/G/H=18-517"/>
</dbReference>
<dbReference type="PDB" id="3N80">
    <property type="method" value="X-ray"/>
    <property type="resolution" value="1.50 A"/>
    <property type="chains" value="A/B/C/D/E/F/G/H=18-517"/>
</dbReference>
<dbReference type="PDB" id="3N81">
    <property type="method" value="X-ray"/>
    <property type="resolution" value="1.70 A"/>
    <property type="chains" value="A/B/C/D/E/F/G/H=18-517"/>
</dbReference>
<dbReference type="PDB" id="3N82">
    <property type="method" value="X-ray"/>
    <property type="resolution" value="2.25 A"/>
    <property type="chains" value="A/B/C/D/E/F/G/H=18-517"/>
</dbReference>
<dbReference type="PDB" id="3N83">
    <property type="method" value="X-ray"/>
    <property type="resolution" value="1.90 A"/>
    <property type="chains" value="A/B/C/D/E/F/G/H=18-517"/>
</dbReference>
<dbReference type="PDB" id="3SZ9">
    <property type="method" value="X-ray"/>
    <property type="resolution" value="2.10 A"/>
    <property type="chains" value="A/B/C/D/E/F/G/H=18-517"/>
</dbReference>
<dbReference type="PDB" id="4FQF">
    <property type="method" value="X-ray"/>
    <property type="resolution" value="2.28 A"/>
    <property type="chains" value="A/B/C/D=18-517"/>
</dbReference>
<dbReference type="PDB" id="4FR8">
    <property type="method" value="X-ray"/>
    <property type="resolution" value="2.20 A"/>
    <property type="chains" value="A/B/C/D/E/F/G/H=18-517"/>
</dbReference>
<dbReference type="PDB" id="4KWF">
    <property type="method" value="X-ray"/>
    <property type="resolution" value="2.31 A"/>
    <property type="chains" value="A/B/C/D/E/F/G/H=24-517"/>
</dbReference>
<dbReference type="PDB" id="4KWG">
    <property type="method" value="X-ray"/>
    <property type="resolution" value="2.10 A"/>
    <property type="chains" value="A/B/C/D/E/F/G/H=24-517"/>
</dbReference>
<dbReference type="PDB" id="5L13">
    <property type="method" value="X-ray"/>
    <property type="resolution" value="2.40 A"/>
    <property type="chains" value="A/B/C/D/E/F/G/H=1-517"/>
</dbReference>
<dbReference type="PDB" id="8DR9">
    <property type="method" value="X-ray"/>
    <property type="resolution" value="1.50 A"/>
    <property type="chains" value="A/B=18-517"/>
</dbReference>
<dbReference type="PDB" id="8SHS">
    <property type="method" value="EM"/>
    <property type="resolution" value="2.66 A"/>
    <property type="chains" value="A/B/C/D=1-517"/>
</dbReference>
<dbReference type="PDBsum" id="1CW3"/>
<dbReference type="PDBsum" id="1NZW"/>
<dbReference type="PDBsum" id="1NZX"/>
<dbReference type="PDBsum" id="1NZZ"/>
<dbReference type="PDBsum" id="1O00"/>
<dbReference type="PDBsum" id="1O01"/>
<dbReference type="PDBsum" id="1O02"/>
<dbReference type="PDBsum" id="1O04"/>
<dbReference type="PDBsum" id="1O05"/>
<dbReference type="PDBsum" id="1ZUM"/>
<dbReference type="PDBsum" id="2ONM"/>
<dbReference type="PDBsum" id="2ONN"/>
<dbReference type="PDBsum" id="2ONO"/>
<dbReference type="PDBsum" id="2ONP"/>
<dbReference type="PDBsum" id="2VLE"/>
<dbReference type="PDBsum" id="3INJ"/>
<dbReference type="PDBsum" id="3INL"/>
<dbReference type="PDBsum" id="3N80"/>
<dbReference type="PDBsum" id="3N81"/>
<dbReference type="PDBsum" id="3N82"/>
<dbReference type="PDBsum" id="3N83"/>
<dbReference type="PDBsum" id="3SZ9"/>
<dbReference type="PDBsum" id="4FQF"/>
<dbReference type="PDBsum" id="4FR8"/>
<dbReference type="PDBsum" id="4KWF"/>
<dbReference type="PDBsum" id="4KWG"/>
<dbReference type="PDBsum" id="5L13"/>
<dbReference type="PDBsum" id="8DR9"/>
<dbReference type="PDBsum" id="8SHS"/>
<dbReference type="EMDB" id="EMD-40493"/>
<dbReference type="SMR" id="P05091"/>
<dbReference type="BioGRID" id="106719">
    <property type="interactions" value="143"/>
</dbReference>
<dbReference type="CORUM" id="P05091"/>
<dbReference type="DIP" id="DIP-40262N"/>
<dbReference type="FunCoup" id="P05091">
    <property type="interactions" value="1423"/>
</dbReference>
<dbReference type="IntAct" id="P05091">
    <property type="interactions" value="65"/>
</dbReference>
<dbReference type="MINT" id="P05091"/>
<dbReference type="STRING" id="9606.ENSP00000261733"/>
<dbReference type="BindingDB" id="P05091"/>
<dbReference type="ChEMBL" id="CHEMBL1935"/>
<dbReference type="DrugBank" id="DB01612">
    <property type="generic name" value="Amyl Nitrite"/>
</dbReference>
<dbReference type="DrugBank" id="DB06770">
    <property type="generic name" value="Benzyl alcohol"/>
</dbReference>
<dbReference type="DrugBank" id="DB09116">
    <property type="generic name" value="Calcium carbimide"/>
</dbReference>
<dbReference type="DrugBank" id="DB04381">
    <property type="generic name" value="Crotonaldehyde"/>
</dbReference>
<dbReference type="DrugBank" id="DB02115">
    <property type="generic name" value="Daidzin"/>
</dbReference>
<dbReference type="DrugBank" id="DB00822">
    <property type="generic name" value="Disulfiram"/>
</dbReference>
<dbReference type="DrugBank" id="DB00536">
    <property type="generic name" value="Guanidine"/>
</dbReference>
<dbReference type="DrugBank" id="DB04202">
    <property type="generic name" value="Isoformononetin"/>
</dbReference>
<dbReference type="DrugBank" id="DB00157">
    <property type="generic name" value="NADH"/>
</dbReference>
<dbReference type="DrugBank" id="DB14128">
    <property type="generic name" value="Nadide"/>
</dbReference>
<dbReference type="DrugBank" id="DB00435">
    <property type="generic name" value="Nitric Oxide"/>
</dbReference>
<dbReference type="DrugBank" id="DB00727">
    <property type="generic name" value="Nitroglycerin"/>
</dbReference>
<dbReference type="DrugBank" id="DB09117">
    <property type="generic name" value="Paraldehyde"/>
</dbReference>
<dbReference type="DrugBank" id="DB06154">
    <property type="generic name" value="Pentaerythritol tetranitrate"/>
</dbReference>
<dbReference type="DrugBank" id="DB06207">
    <property type="generic name" value="Silodosin"/>
</dbReference>
<dbReference type="DrugCentral" id="P05091"/>
<dbReference type="GuidetoPHARMACOLOGY" id="2595"/>
<dbReference type="GlyGen" id="P05091">
    <property type="glycosylation" value="2 sites, 1 O-linked glycan (1 site)"/>
</dbReference>
<dbReference type="iPTMnet" id="P05091"/>
<dbReference type="MetOSite" id="P05091"/>
<dbReference type="PhosphoSitePlus" id="P05091"/>
<dbReference type="SwissPalm" id="P05091"/>
<dbReference type="BioMuta" id="ALDH2"/>
<dbReference type="DMDM" id="118504"/>
<dbReference type="REPRODUCTION-2DPAGE" id="IPI00006663"/>
<dbReference type="REPRODUCTION-2DPAGE" id="P05091"/>
<dbReference type="CPTAC" id="CPTAC-12"/>
<dbReference type="CPTAC" id="CPTAC-13"/>
<dbReference type="CPTAC" id="CPTAC-14"/>
<dbReference type="CPTAC" id="CPTAC-1594"/>
<dbReference type="jPOST" id="P05091"/>
<dbReference type="MassIVE" id="P05091"/>
<dbReference type="PaxDb" id="9606-ENSP00000261733"/>
<dbReference type="PeptideAtlas" id="P05091"/>
<dbReference type="PRIDE" id="P05091"/>
<dbReference type="ProteomicsDB" id="18413"/>
<dbReference type="ProteomicsDB" id="51788">
    <molecule id="P05091-1"/>
</dbReference>
<dbReference type="Pumba" id="P05091"/>
<dbReference type="Antibodypedia" id="31130">
    <property type="antibodies" value="675 antibodies from 40 providers"/>
</dbReference>
<dbReference type="DNASU" id="217"/>
<dbReference type="Ensembl" id="ENST00000261733.7">
    <molecule id="P05091-1"/>
    <property type="protein sequence ID" value="ENSP00000261733.2"/>
    <property type="gene ID" value="ENSG00000111275.13"/>
</dbReference>
<dbReference type="Ensembl" id="ENST00000416293.7">
    <molecule id="P05091-2"/>
    <property type="protein sequence ID" value="ENSP00000403349.3"/>
    <property type="gene ID" value="ENSG00000111275.13"/>
</dbReference>
<dbReference type="GeneID" id="217"/>
<dbReference type="KEGG" id="hsa:217"/>
<dbReference type="MANE-Select" id="ENST00000261733.7">
    <property type="protein sequence ID" value="ENSP00000261733.2"/>
    <property type="RefSeq nucleotide sequence ID" value="NM_000690.4"/>
    <property type="RefSeq protein sequence ID" value="NP_000681.2"/>
</dbReference>
<dbReference type="UCSC" id="uc001tst.4">
    <molecule id="P05091-1"/>
    <property type="organism name" value="human"/>
</dbReference>
<dbReference type="AGR" id="HGNC:404"/>
<dbReference type="CTD" id="217"/>
<dbReference type="DisGeNET" id="217"/>
<dbReference type="GeneCards" id="ALDH2"/>
<dbReference type="HGNC" id="HGNC:404">
    <property type="gene designation" value="ALDH2"/>
</dbReference>
<dbReference type="HPA" id="ENSG00000111275">
    <property type="expression patterns" value="Tissue enhanced (liver)"/>
</dbReference>
<dbReference type="MalaCards" id="ALDH2"/>
<dbReference type="MIM" id="100650">
    <property type="type" value="gene+phenotype"/>
</dbReference>
<dbReference type="MIM" id="610251">
    <property type="type" value="phenotype"/>
</dbReference>
<dbReference type="MIM" id="619151">
    <property type="type" value="phenotype"/>
</dbReference>
<dbReference type="neXtProt" id="NX_P05091"/>
<dbReference type="OpenTargets" id="ENSG00000111275"/>
<dbReference type="PharmGKB" id="PA24696"/>
<dbReference type="VEuPathDB" id="HostDB:ENSG00000111275"/>
<dbReference type="eggNOG" id="KOG2450">
    <property type="taxonomic scope" value="Eukaryota"/>
</dbReference>
<dbReference type="GeneTree" id="ENSGT00940000156240"/>
<dbReference type="HOGENOM" id="CLU_005391_0_1_1"/>
<dbReference type="InParanoid" id="P05091"/>
<dbReference type="OMA" id="GQLIMQY"/>
<dbReference type="OrthoDB" id="310895at2759"/>
<dbReference type="PAN-GO" id="P05091">
    <property type="GO annotations" value="1 GO annotation based on evolutionary models"/>
</dbReference>
<dbReference type="PhylomeDB" id="P05091"/>
<dbReference type="TreeFam" id="TF300455"/>
<dbReference type="BioCyc" id="MetaCyc:MONOMER66-302"/>
<dbReference type="BRENDA" id="1.2.1.3">
    <property type="organism ID" value="2681"/>
</dbReference>
<dbReference type="PathwayCommons" id="P05091"/>
<dbReference type="Reactome" id="R-HSA-380612">
    <property type="pathway name" value="Metabolism of serotonin"/>
</dbReference>
<dbReference type="Reactome" id="R-HSA-445355">
    <property type="pathway name" value="Smooth Muscle Contraction"/>
</dbReference>
<dbReference type="Reactome" id="R-HSA-71384">
    <property type="pathway name" value="Ethanol oxidation"/>
</dbReference>
<dbReference type="Reactome" id="R-HSA-9837999">
    <property type="pathway name" value="Mitochondrial protein degradation"/>
</dbReference>
<dbReference type="SABIO-RK" id="P05091"/>
<dbReference type="SignaLink" id="P05091"/>
<dbReference type="SIGNOR" id="P05091"/>
<dbReference type="UniPathway" id="UPA00780">
    <property type="reaction ID" value="UER00768"/>
</dbReference>
<dbReference type="BioGRID-ORCS" id="217">
    <property type="hits" value="11 hits in 1162 CRISPR screens"/>
</dbReference>
<dbReference type="CD-CODE" id="91857CE7">
    <property type="entry name" value="Nucleolus"/>
</dbReference>
<dbReference type="CD-CODE" id="FB4E32DD">
    <property type="entry name" value="Presynaptic clusters and postsynaptic densities"/>
</dbReference>
<dbReference type="ChiTaRS" id="ALDH2">
    <property type="organism name" value="human"/>
</dbReference>
<dbReference type="EvolutionaryTrace" id="P05091"/>
<dbReference type="GeneWiki" id="ALDH2"/>
<dbReference type="GenomeRNAi" id="217"/>
<dbReference type="Pharos" id="P05091">
    <property type="development level" value="Tclin"/>
</dbReference>
<dbReference type="PRO" id="PR:P05091"/>
<dbReference type="Proteomes" id="UP000005640">
    <property type="component" value="Chromosome 12"/>
</dbReference>
<dbReference type="RNAct" id="P05091">
    <property type="molecule type" value="protein"/>
</dbReference>
<dbReference type="Bgee" id="ENSG00000111275">
    <property type="expression patterns" value="Expressed in right lobe of liver and 208 other cell types or tissues"/>
</dbReference>
<dbReference type="ExpressionAtlas" id="P05091">
    <property type="expression patterns" value="baseline and differential"/>
</dbReference>
<dbReference type="GO" id="GO:0070062">
    <property type="term" value="C:extracellular exosome"/>
    <property type="evidence" value="ECO:0007005"/>
    <property type="project" value="UniProtKB"/>
</dbReference>
<dbReference type="GO" id="GO:0005759">
    <property type="term" value="C:mitochondrial matrix"/>
    <property type="evidence" value="ECO:0000304"/>
    <property type="project" value="Reactome"/>
</dbReference>
<dbReference type="GO" id="GO:0005739">
    <property type="term" value="C:mitochondrion"/>
    <property type="evidence" value="ECO:0006056"/>
    <property type="project" value="FlyBase"/>
</dbReference>
<dbReference type="GO" id="GO:0004029">
    <property type="term" value="F:aldehyde dehydrogenase (NAD+) activity"/>
    <property type="evidence" value="ECO:0000314"/>
    <property type="project" value="UniProtKB"/>
</dbReference>
<dbReference type="GO" id="GO:0004030">
    <property type="term" value="F:aldehyde dehydrogenase [NAD(P)+] activity"/>
    <property type="evidence" value="ECO:0000304"/>
    <property type="project" value="ProtInc"/>
</dbReference>
<dbReference type="GO" id="GO:0106435">
    <property type="term" value="F:carboxylesterase activity"/>
    <property type="evidence" value="ECO:0000314"/>
    <property type="project" value="UniProtKB"/>
</dbReference>
<dbReference type="GO" id="GO:0009055">
    <property type="term" value="F:electron transfer activity"/>
    <property type="evidence" value="ECO:0000304"/>
    <property type="project" value="UniProtKB"/>
</dbReference>
<dbReference type="GO" id="GO:0051287">
    <property type="term" value="F:NAD binding"/>
    <property type="evidence" value="ECO:0000250"/>
    <property type="project" value="CAFA"/>
</dbReference>
<dbReference type="GO" id="GO:0008957">
    <property type="term" value="F:phenylacetaldehyde dehydrogenase (NAD+) activity"/>
    <property type="evidence" value="ECO:0000250"/>
    <property type="project" value="UniProtKB"/>
</dbReference>
<dbReference type="GO" id="GO:0006066">
    <property type="term" value="P:alcohol metabolic process"/>
    <property type="evidence" value="ECO:0000304"/>
    <property type="project" value="ProtInc"/>
</dbReference>
<dbReference type="GO" id="GO:0046185">
    <property type="term" value="P:aldehyde catabolic process"/>
    <property type="evidence" value="ECO:0000314"/>
    <property type="project" value="UniProtKB"/>
</dbReference>
<dbReference type="GO" id="GO:0005975">
    <property type="term" value="P:carbohydrate metabolic process"/>
    <property type="evidence" value="ECO:0000304"/>
    <property type="project" value="ProtInc"/>
</dbReference>
<dbReference type="GO" id="GO:0006068">
    <property type="term" value="P:ethanol catabolic process"/>
    <property type="evidence" value="ECO:0007669"/>
    <property type="project" value="UniProtKB-UniPathway"/>
</dbReference>
<dbReference type="GO" id="GO:0018937">
    <property type="term" value="P:nitroglycerin metabolic process"/>
    <property type="evidence" value="ECO:0000314"/>
    <property type="project" value="UniProtKB"/>
</dbReference>
<dbReference type="GO" id="GO:1903179">
    <property type="term" value="P:regulation of dopamine biosynthetic process"/>
    <property type="evidence" value="ECO:0000250"/>
    <property type="project" value="UniProtKB"/>
</dbReference>
<dbReference type="GO" id="GO:1905627">
    <property type="term" value="P:regulation of serotonin biosynthetic process"/>
    <property type="evidence" value="ECO:0000250"/>
    <property type="project" value="UniProtKB"/>
</dbReference>
<dbReference type="CDD" id="cd07141">
    <property type="entry name" value="ALDH_F1AB_F2_RALDH1"/>
    <property type="match status" value="1"/>
</dbReference>
<dbReference type="FunFam" id="3.40.605.10:FF:000029">
    <property type="entry name" value="Aldehyde dehydrogenase, mitochondrial"/>
    <property type="match status" value="1"/>
</dbReference>
<dbReference type="FunFam" id="3.40.605.10:FF:000026">
    <property type="entry name" value="Aldehyde dehydrogenase, putative"/>
    <property type="match status" value="1"/>
</dbReference>
<dbReference type="FunFam" id="3.40.309.10:FF:000001">
    <property type="entry name" value="Mitochondrial aldehyde dehydrogenase 2"/>
    <property type="match status" value="1"/>
</dbReference>
<dbReference type="Gene3D" id="3.40.605.10">
    <property type="entry name" value="Aldehyde Dehydrogenase, Chain A, domain 1"/>
    <property type="match status" value="1"/>
</dbReference>
<dbReference type="Gene3D" id="3.40.309.10">
    <property type="entry name" value="Aldehyde Dehydrogenase, Chain A, domain 2"/>
    <property type="match status" value="1"/>
</dbReference>
<dbReference type="InterPro" id="IPR016161">
    <property type="entry name" value="Ald_DH/histidinol_DH"/>
</dbReference>
<dbReference type="InterPro" id="IPR016163">
    <property type="entry name" value="Ald_DH_C"/>
</dbReference>
<dbReference type="InterPro" id="IPR016160">
    <property type="entry name" value="Ald_DH_CS_CYS"/>
</dbReference>
<dbReference type="InterPro" id="IPR029510">
    <property type="entry name" value="Ald_DH_CS_GLU"/>
</dbReference>
<dbReference type="InterPro" id="IPR016162">
    <property type="entry name" value="Ald_DH_N"/>
</dbReference>
<dbReference type="InterPro" id="IPR015590">
    <property type="entry name" value="Aldehyde_DH_dom"/>
</dbReference>
<dbReference type="PANTHER" id="PTHR11699">
    <property type="entry name" value="ALDEHYDE DEHYDROGENASE-RELATED"/>
    <property type="match status" value="1"/>
</dbReference>
<dbReference type="Pfam" id="PF00171">
    <property type="entry name" value="Aldedh"/>
    <property type="match status" value="1"/>
</dbReference>
<dbReference type="SUPFAM" id="SSF53720">
    <property type="entry name" value="ALDH-like"/>
    <property type="match status" value="1"/>
</dbReference>
<dbReference type="PROSITE" id="PS00070">
    <property type="entry name" value="ALDEHYDE_DEHYDR_CYS"/>
    <property type="match status" value="1"/>
</dbReference>
<dbReference type="PROSITE" id="PS00687">
    <property type="entry name" value="ALDEHYDE_DEHYDR_GLU"/>
    <property type="match status" value="1"/>
</dbReference>
<keyword id="KW-0002">3D-structure</keyword>
<keyword id="KW-0007">Acetylation</keyword>
<keyword id="KW-0025">Alternative splicing</keyword>
<keyword id="KW-0903">Direct protein sequencing</keyword>
<keyword id="KW-0225">Disease variant</keyword>
<keyword id="KW-0242">Dwarfism</keyword>
<keyword id="KW-0991">Intellectual disability</keyword>
<keyword id="KW-0496">Mitochondrion</keyword>
<keyword id="KW-0520">NAD</keyword>
<keyword id="KW-0560">Oxidoreductase</keyword>
<keyword id="KW-1267">Proteomics identification</keyword>
<keyword id="KW-1185">Reference proteome</keyword>
<keyword id="KW-0809">Transit peptide</keyword>
<keyword id="KW-0832">Ubl conjugation</keyword>
<feature type="transit peptide" description="Mitochondrion">
    <location>
        <begin position="1"/>
        <end position="17"/>
    </location>
</feature>
<feature type="chain" id="PRO_0000007168" description="Aldehyde dehydrogenase, mitochondrial">
    <location>
        <begin position="18"/>
        <end position="517"/>
    </location>
</feature>
<feature type="short sequence motif" description="SIFI-degron" evidence="6">
    <location>
        <begin position="9"/>
        <end position="24"/>
    </location>
</feature>
<feature type="active site" description="Proton acceptor">
    <location>
        <position position="285"/>
    </location>
</feature>
<feature type="active site" description="Nucleophile">
    <location>
        <position position="319"/>
    </location>
</feature>
<feature type="binding site" evidence="1">
    <location>
        <begin position="262"/>
        <end position="267"/>
    </location>
    <ligand>
        <name>NAD(+)</name>
        <dbReference type="ChEBI" id="CHEBI:57540"/>
    </ligand>
</feature>
<feature type="site" description="Transition state stabilizer" evidence="2">
    <location>
        <position position="186"/>
    </location>
</feature>
<feature type="modified residue" description="N6-acetyllysine" evidence="3">
    <location>
        <position position="52"/>
    </location>
</feature>
<feature type="modified residue" description="N6-acetyllysine" evidence="3">
    <location>
        <position position="73"/>
    </location>
</feature>
<feature type="modified residue" description="N6-acetyllysine" evidence="3">
    <location>
        <position position="78"/>
    </location>
</feature>
<feature type="modified residue" description="N6-acetyllysine" evidence="3">
    <location>
        <position position="159"/>
    </location>
</feature>
<feature type="modified residue" description="N6-acetyllysine" evidence="3">
    <location>
        <position position="368"/>
    </location>
</feature>
<feature type="modified residue" description="N6-acetyllysine" evidence="3">
    <location>
        <position position="383"/>
    </location>
</feature>
<feature type="modified residue" description="N6-acetyllysine" evidence="3">
    <location>
        <position position="426"/>
    </location>
</feature>
<feature type="modified residue" description="N6-acetyllysine" evidence="3">
    <location>
        <position position="428"/>
    </location>
</feature>
<feature type="modified residue" description="N6-acetyllysine" evidence="3">
    <location>
        <position position="451"/>
    </location>
</feature>
<feature type="splice variant" id="VSP_046715" description="In isoform 2." evidence="9">
    <location>
        <begin position="74"/>
        <end position="120"/>
    </location>
</feature>
<feature type="sequence variant" id="VAR_011869" description="In dbSNP:rs1062136." evidence="5">
    <original>E</original>
    <variation>V</variation>
    <location>
        <position position="337"/>
    </location>
</feature>
<feature type="sequence variant" id="VAR_011302" description="In allele ALDH2*3; dbSNP:rs769724893." evidence="8">
    <original>E</original>
    <variation>K</variation>
    <location>
        <position position="496"/>
    </location>
</feature>
<feature type="sequence variant" id="VAR_002248" description="In AMEDS; allele ALDH2*2; drastic reduction of enzyme activity; dbSNP:rs671." evidence="4 7">
    <original>E</original>
    <variation>K</variation>
    <location>
        <position position="504"/>
    </location>
</feature>
<feature type="sequence conflict" description="In Ref. 1; CAA28990." evidence="10" ref="1">
    <original>RFGPRL</original>
    <variation>ARAPP</variation>
    <location>
        <begin position="7"/>
        <end position="12"/>
    </location>
</feature>
<feature type="sequence conflict" description="In Ref. 10; AA sequence." evidence="10" ref="10">
    <original>S</original>
    <variation>A</variation>
    <location>
        <position position="18"/>
    </location>
</feature>
<feature type="sequence conflict" description="In Ref. 6; CAG33272." evidence="10" ref="6">
    <original>S</original>
    <variation>F</variation>
    <location>
        <position position="60"/>
    </location>
</feature>
<feature type="sequence conflict" description="In Ref. 1; CAA28990." evidence="10" ref="1">
    <original>VKAARA</original>
    <variation>REGRPG</variation>
    <location>
        <begin position="80"/>
        <end position="85"/>
    </location>
</feature>
<feature type="sequence conflict" description="In Ref. 1; CAA28990." evidence="10" ref="1">
    <original>R</original>
    <variation>S</variation>
    <location>
        <position position="101"/>
    </location>
</feature>
<feature type="sequence conflict" description="In Ref. 5; AAT41621." evidence="10" ref="5">
    <original>R</original>
    <variation>Q</variation>
    <location>
        <position position="116"/>
    </location>
</feature>
<feature type="sequence conflict" description="In Ref. 15; AAA62825." evidence="10" ref="15">
    <original>L</original>
    <variation>S</variation>
    <location>
        <position position="216"/>
    </location>
</feature>
<feature type="sequence conflict" description="In Ref. 15; AAA62825." evidence="10" ref="15">
    <original>A</original>
    <variation>R</variation>
    <location>
        <position position="218"/>
    </location>
</feature>
<feature type="sequence conflict" description="In Ref. 15; AAA62825." evidence="10" ref="15">
    <original>A</original>
    <variation>P</variation>
    <location>
        <position position="247"/>
    </location>
</feature>
<feature type="sequence conflict" description="In Ref. 7; BAG62916." evidence="10" ref="7">
    <original>Y</original>
    <variation>C</variation>
    <location>
        <position position="332"/>
    </location>
</feature>
<feature type="sequence conflict" description="In Ref. 6; CAG33272." evidence="10" ref="6">
    <original>V</original>
    <variation>L</variation>
    <location>
        <position position="362"/>
    </location>
</feature>
<feature type="sequence conflict" description="In Ref. 4; AAA51693." evidence="10" ref="4">
    <original>E</original>
    <variation>Q</variation>
    <location>
        <position position="380"/>
    </location>
</feature>
<feature type="strand" evidence="11">
    <location>
        <begin position="38"/>
        <end position="41"/>
    </location>
</feature>
<feature type="strand" evidence="11">
    <location>
        <begin position="44"/>
        <end position="46"/>
    </location>
</feature>
<feature type="strand" evidence="11">
    <location>
        <begin position="53"/>
        <end position="57"/>
    </location>
</feature>
<feature type="turn" evidence="11">
    <location>
        <begin position="59"/>
        <end position="61"/>
    </location>
</feature>
<feature type="strand" evidence="11">
    <location>
        <begin position="64"/>
        <end position="69"/>
    </location>
</feature>
<feature type="helix" evidence="11">
    <location>
        <begin position="73"/>
        <end position="86"/>
    </location>
</feature>
<feature type="helix" evidence="11">
    <location>
        <begin position="92"/>
        <end position="95"/>
    </location>
</feature>
<feature type="helix" evidence="11">
    <location>
        <begin position="98"/>
        <end position="114"/>
    </location>
</feature>
<feature type="helix" evidence="11">
    <location>
        <begin position="116"/>
        <end position="127"/>
    </location>
</feature>
<feature type="helix" evidence="11">
    <location>
        <begin position="131"/>
        <end position="136"/>
    </location>
</feature>
<feature type="helix" evidence="11">
    <location>
        <begin position="138"/>
        <end position="152"/>
    </location>
</feature>
<feature type="turn" evidence="11">
    <location>
        <begin position="153"/>
        <end position="155"/>
    </location>
</feature>
<feature type="strand" evidence="11">
    <location>
        <begin position="158"/>
        <end position="161"/>
    </location>
</feature>
<feature type="strand" evidence="11">
    <location>
        <begin position="164"/>
        <end position="175"/>
    </location>
</feature>
<feature type="strand" evidence="11">
    <location>
        <begin position="178"/>
        <end position="182"/>
    </location>
</feature>
<feature type="strand" evidence="11">
    <location>
        <begin position="185"/>
        <end position="187"/>
    </location>
</feature>
<feature type="helix" evidence="11">
    <location>
        <begin position="188"/>
        <end position="201"/>
    </location>
</feature>
<feature type="strand" evidence="11">
    <location>
        <begin position="205"/>
        <end position="209"/>
    </location>
</feature>
<feature type="strand" evidence="14">
    <location>
        <begin position="212"/>
        <end position="214"/>
    </location>
</feature>
<feature type="helix" evidence="11">
    <location>
        <begin position="216"/>
        <end position="228"/>
    </location>
</feature>
<feature type="strand" evidence="11">
    <location>
        <begin position="234"/>
        <end position="237"/>
    </location>
</feature>
<feature type="turn" evidence="11">
    <location>
        <begin position="242"/>
        <end position="244"/>
    </location>
</feature>
<feature type="helix" evidence="11">
    <location>
        <begin position="245"/>
        <end position="250"/>
    </location>
</feature>
<feature type="strand" evidence="11">
    <location>
        <begin position="257"/>
        <end position="262"/>
    </location>
</feature>
<feature type="helix" evidence="11">
    <location>
        <begin position="264"/>
        <end position="276"/>
    </location>
</feature>
<feature type="strand" evidence="11">
    <location>
        <begin position="281"/>
        <end position="285"/>
    </location>
</feature>
<feature type="strand" evidence="11">
    <location>
        <begin position="290"/>
        <end position="294"/>
    </location>
</feature>
<feature type="helix" evidence="11">
    <location>
        <begin position="300"/>
        <end position="312"/>
    </location>
</feature>
<feature type="helix" evidence="11">
    <location>
        <begin position="313"/>
        <end position="316"/>
    </location>
</feature>
<feature type="strand" evidence="11">
    <location>
        <begin position="322"/>
        <end position="328"/>
    </location>
</feature>
<feature type="helix" evidence="11">
    <location>
        <begin position="329"/>
        <end position="345"/>
    </location>
</feature>
<feature type="helix" evidence="11">
    <location>
        <begin position="364"/>
        <end position="379"/>
    </location>
</feature>
<feature type="strand" evidence="11">
    <location>
        <begin position="383"/>
        <end position="386"/>
    </location>
</feature>
<feature type="strand" evidence="13">
    <location>
        <begin position="389"/>
        <end position="391"/>
    </location>
</feature>
<feature type="strand" evidence="11">
    <location>
        <begin position="393"/>
        <end position="396"/>
    </location>
</feature>
<feature type="strand" evidence="11">
    <location>
        <begin position="401"/>
        <end position="405"/>
    </location>
</feature>
<feature type="helix" evidence="11">
    <location>
        <begin position="411"/>
        <end position="414"/>
    </location>
</feature>
<feature type="strand" evidence="11">
    <location>
        <begin position="419"/>
        <end position="427"/>
    </location>
</feature>
<feature type="helix" evidence="11">
    <location>
        <begin position="430"/>
        <end position="438"/>
    </location>
</feature>
<feature type="strand" evidence="13">
    <location>
        <begin position="439"/>
        <end position="441"/>
    </location>
</feature>
<feature type="strand" evidence="11">
    <location>
        <begin position="444"/>
        <end position="449"/>
    </location>
</feature>
<feature type="helix" evidence="11">
    <location>
        <begin position="453"/>
        <end position="462"/>
    </location>
</feature>
<feature type="strand" evidence="11">
    <location>
        <begin position="465"/>
        <end position="471"/>
    </location>
</feature>
<feature type="strand" evidence="12">
    <location>
        <begin position="478"/>
        <end position="480"/>
    </location>
</feature>
<feature type="helix" evidence="11">
    <location>
        <begin position="486"/>
        <end position="488"/>
    </location>
</feature>
<feature type="strand" evidence="11">
    <location>
        <begin position="489"/>
        <end position="491"/>
    </location>
</feature>
<feature type="helix" evidence="11">
    <location>
        <begin position="496"/>
        <end position="502"/>
    </location>
</feature>
<feature type="strand" evidence="11">
    <location>
        <begin position="503"/>
        <end position="511"/>
    </location>
</feature>
<name>ALDH2_HUMAN</name>
<accession>P05091</accession>
<accession>B4DW54</accession>
<accession>E7EUE5</accession>
<accession>Q03639</accession>
<accession>Q6IB13</accession>
<accession>Q6IV71</accession>
<gene>
    <name type="primary">ALDH2</name>
    <name type="synonym">ALDM</name>
</gene>
<evidence type="ECO:0000250" key="1"/>
<evidence type="ECO:0000250" key="2">
    <source>
        <dbReference type="UniProtKB" id="P20000"/>
    </source>
</evidence>
<evidence type="ECO:0000250" key="3">
    <source>
        <dbReference type="UniProtKB" id="P47738"/>
    </source>
</evidence>
<evidence type="ECO:0000269" key="4">
    <source>
    </source>
</evidence>
<evidence type="ECO:0000269" key="5">
    <source>
    </source>
</evidence>
<evidence type="ECO:0000269" key="6">
    <source>
    </source>
</evidence>
<evidence type="ECO:0000269" key="7">
    <source>
    </source>
</evidence>
<evidence type="ECO:0000269" key="8">
    <source>
    </source>
</evidence>
<evidence type="ECO:0000303" key="9">
    <source>
    </source>
</evidence>
<evidence type="ECO:0000305" key="10"/>
<evidence type="ECO:0007829" key="11">
    <source>
        <dbReference type="PDB" id="1O04"/>
    </source>
</evidence>
<evidence type="ECO:0007829" key="12">
    <source>
        <dbReference type="PDB" id="2ONO"/>
    </source>
</evidence>
<evidence type="ECO:0007829" key="13">
    <source>
        <dbReference type="PDB" id="3INL"/>
    </source>
</evidence>
<evidence type="ECO:0007829" key="14">
    <source>
        <dbReference type="PDB" id="4KWF"/>
    </source>
</evidence>
<reference key="1">
    <citation type="journal article" date="1987" name="FEBS Lett.">
        <title>Evidence for a signal peptide at the amino-terminal end of human mitochondrial aldehyde dehydrogenase.</title>
        <authorList>
            <person name="Braun T."/>
            <person name="Bober E."/>
            <person name="Singh S."/>
            <person name="Agarwal D.P."/>
            <person name="Goedde H.W."/>
        </authorList>
    </citation>
    <scope>NUCLEOTIDE SEQUENCE [MRNA] (ISOFORM 1)</scope>
    <source>
        <tissue>Muscle</tissue>
    </source>
</reference>
<reference key="2">
    <citation type="journal article" date="1988" name="FEBS Lett.">
        <authorList>
            <person name="Braun T."/>
            <person name="Bober E."/>
            <person name="Singh S."/>
            <person name="Agarwal D.P."/>
            <person name="Goedde H.W."/>
        </authorList>
    </citation>
    <scope>ERRATUM OF PUBMED:3582651</scope>
    <scope>SEQUENCE REVISION TO N-TERMINUS</scope>
</reference>
<reference key="3">
    <citation type="journal article" date="1987" name="Nucleic Acids Res.">
        <title>Isolation and sequence analysis of a full length cDNA clone coding for human mitochondrial aldehyde dehydrogenase.</title>
        <authorList>
            <person name="Braun T."/>
            <person name="Bober E."/>
            <person name="Singh S."/>
            <person name="Agarwal D.P."/>
            <person name="Goedde H.W."/>
        </authorList>
    </citation>
    <scope>NUCLEOTIDE SEQUENCE [MRNA] (ISOFORM 1)</scope>
    <source>
        <tissue>Muscle</tissue>
    </source>
</reference>
<reference key="4">
    <citation type="journal article" date="1988" name="Genomics">
        <title>Genomic structure of the human mitochondrial aldehyde dehydrogenase gene.</title>
        <authorList>
            <person name="Hsu L.C."/>
            <person name="Bendel R.E."/>
            <person name="Yoshida A."/>
        </authorList>
    </citation>
    <scope>NUCLEOTIDE SEQUENCE [GENOMIC DNA]</scope>
</reference>
<reference key="5">
    <citation type="submission" date="2004-05" db="EMBL/GenBank/DDBJ databases">
        <authorList>
            <person name="Lassen N."/>
            <person name="Estey T."/>
            <person name="Vasiliou V."/>
        </authorList>
    </citation>
    <scope>NUCLEOTIDE SEQUENCE [MRNA] (ISOFORM 1)</scope>
</reference>
<reference key="6">
    <citation type="submission" date="2004-06" db="EMBL/GenBank/DDBJ databases">
        <title>Cloning of human full open reading frames in Gateway(TM) system entry vector (pDONR201).</title>
        <authorList>
            <person name="Ebert L."/>
            <person name="Schick M."/>
            <person name="Neubert P."/>
            <person name="Schatten R."/>
            <person name="Henze S."/>
            <person name="Korn B."/>
        </authorList>
    </citation>
    <scope>NUCLEOTIDE SEQUENCE [LARGE SCALE MRNA] (ISOFORM 1)</scope>
</reference>
<reference key="7">
    <citation type="journal article" date="2004" name="Nat. Genet.">
        <title>Complete sequencing and characterization of 21,243 full-length human cDNAs.</title>
        <authorList>
            <person name="Ota T."/>
            <person name="Suzuki Y."/>
            <person name="Nishikawa T."/>
            <person name="Otsuki T."/>
            <person name="Sugiyama T."/>
            <person name="Irie R."/>
            <person name="Wakamatsu A."/>
            <person name="Hayashi K."/>
            <person name="Sato H."/>
            <person name="Nagai K."/>
            <person name="Kimura K."/>
            <person name="Makita H."/>
            <person name="Sekine M."/>
            <person name="Obayashi M."/>
            <person name="Nishi T."/>
            <person name="Shibahara T."/>
            <person name="Tanaka T."/>
            <person name="Ishii S."/>
            <person name="Yamamoto J."/>
            <person name="Saito K."/>
            <person name="Kawai Y."/>
            <person name="Isono Y."/>
            <person name="Nakamura Y."/>
            <person name="Nagahari K."/>
            <person name="Murakami K."/>
            <person name="Yasuda T."/>
            <person name="Iwayanagi T."/>
            <person name="Wagatsuma M."/>
            <person name="Shiratori A."/>
            <person name="Sudo H."/>
            <person name="Hosoiri T."/>
            <person name="Kaku Y."/>
            <person name="Kodaira H."/>
            <person name="Kondo H."/>
            <person name="Sugawara M."/>
            <person name="Takahashi M."/>
            <person name="Kanda K."/>
            <person name="Yokoi T."/>
            <person name="Furuya T."/>
            <person name="Kikkawa E."/>
            <person name="Omura Y."/>
            <person name="Abe K."/>
            <person name="Kamihara K."/>
            <person name="Katsuta N."/>
            <person name="Sato K."/>
            <person name="Tanikawa M."/>
            <person name="Yamazaki M."/>
            <person name="Ninomiya K."/>
            <person name="Ishibashi T."/>
            <person name="Yamashita H."/>
            <person name="Murakawa K."/>
            <person name="Fujimori K."/>
            <person name="Tanai H."/>
            <person name="Kimata M."/>
            <person name="Watanabe M."/>
            <person name="Hiraoka S."/>
            <person name="Chiba Y."/>
            <person name="Ishida S."/>
            <person name="Ono Y."/>
            <person name="Takiguchi S."/>
            <person name="Watanabe S."/>
            <person name="Yosida M."/>
            <person name="Hotuta T."/>
            <person name="Kusano J."/>
            <person name="Kanehori K."/>
            <person name="Takahashi-Fujii A."/>
            <person name="Hara H."/>
            <person name="Tanase T.-O."/>
            <person name="Nomura Y."/>
            <person name="Togiya S."/>
            <person name="Komai F."/>
            <person name="Hara R."/>
            <person name="Takeuchi K."/>
            <person name="Arita M."/>
            <person name="Imose N."/>
            <person name="Musashino K."/>
            <person name="Yuuki H."/>
            <person name="Oshima A."/>
            <person name="Sasaki N."/>
            <person name="Aotsuka S."/>
            <person name="Yoshikawa Y."/>
            <person name="Matsunawa H."/>
            <person name="Ichihara T."/>
            <person name="Shiohata N."/>
            <person name="Sano S."/>
            <person name="Moriya S."/>
            <person name="Momiyama H."/>
            <person name="Satoh N."/>
            <person name="Takami S."/>
            <person name="Terashima Y."/>
            <person name="Suzuki O."/>
            <person name="Nakagawa S."/>
            <person name="Senoh A."/>
            <person name="Mizoguchi H."/>
            <person name="Goto Y."/>
            <person name="Shimizu F."/>
            <person name="Wakebe H."/>
            <person name="Hishigaki H."/>
            <person name="Watanabe T."/>
            <person name="Sugiyama A."/>
            <person name="Takemoto M."/>
            <person name="Kawakami B."/>
            <person name="Yamazaki M."/>
            <person name="Watanabe K."/>
            <person name="Kumagai A."/>
            <person name="Itakura S."/>
            <person name="Fukuzumi Y."/>
            <person name="Fujimori Y."/>
            <person name="Komiyama M."/>
            <person name="Tashiro H."/>
            <person name="Tanigami A."/>
            <person name="Fujiwara T."/>
            <person name="Ono T."/>
            <person name="Yamada K."/>
            <person name="Fujii Y."/>
            <person name="Ozaki K."/>
            <person name="Hirao M."/>
            <person name="Ohmori Y."/>
            <person name="Kawabata A."/>
            <person name="Hikiji T."/>
            <person name="Kobatake N."/>
            <person name="Inagaki H."/>
            <person name="Ikema Y."/>
            <person name="Okamoto S."/>
            <person name="Okitani R."/>
            <person name="Kawakami T."/>
            <person name="Noguchi S."/>
            <person name="Itoh T."/>
            <person name="Shigeta K."/>
            <person name="Senba T."/>
            <person name="Matsumura K."/>
            <person name="Nakajima Y."/>
            <person name="Mizuno T."/>
            <person name="Morinaga M."/>
            <person name="Sasaki M."/>
            <person name="Togashi T."/>
            <person name="Oyama M."/>
            <person name="Hata H."/>
            <person name="Watanabe M."/>
            <person name="Komatsu T."/>
            <person name="Mizushima-Sugano J."/>
            <person name="Satoh T."/>
            <person name="Shirai Y."/>
            <person name="Takahashi Y."/>
            <person name="Nakagawa K."/>
            <person name="Okumura K."/>
            <person name="Nagase T."/>
            <person name="Nomura N."/>
            <person name="Kikuchi H."/>
            <person name="Masuho Y."/>
            <person name="Yamashita R."/>
            <person name="Nakai K."/>
            <person name="Yada T."/>
            <person name="Nakamura Y."/>
            <person name="Ohara O."/>
            <person name="Isogai T."/>
            <person name="Sugano S."/>
        </authorList>
    </citation>
    <scope>NUCLEOTIDE SEQUENCE [LARGE SCALE MRNA] (ISOFORM 2)</scope>
    <source>
        <tissue>Synovium</tissue>
    </source>
</reference>
<reference key="8">
    <citation type="journal article" date="2006" name="Nature">
        <title>The finished DNA sequence of human chromosome 12.</title>
        <authorList>
            <person name="Scherer S.E."/>
            <person name="Muzny D.M."/>
            <person name="Buhay C.J."/>
            <person name="Chen R."/>
            <person name="Cree A."/>
            <person name="Ding Y."/>
            <person name="Dugan-Rocha S."/>
            <person name="Gill R."/>
            <person name="Gunaratne P."/>
            <person name="Harris R.A."/>
            <person name="Hawes A.C."/>
            <person name="Hernandez J."/>
            <person name="Hodgson A.V."/>
            <person name="Hume J."/>
            <person name="Jackson A."/>
            <person name="Khan Z.M."/>
            <person name="Kovar-Smith C."/>
            <person name="Lewis L.R."/>
            <person name="Lozado R.J."/>
            <person name="Metzker M.L."/>
            <person name="Milosavljevic A."/>
            <person name="Miner G.R."/>
            <person name="Montgomery K.T."/>
            <person name="Morgan M.B."/>
            <person name="Nazareth L.V."/>
            <person name="Scott G."/>
            <person name="Sodergren E."/>
            <person name="Song X.-Z."/>
            <person name="Steffen D."/>
            <person name="Lovering R.C."/>
            <person name="Wheeler D.A."/>
            <person name="Worley K.C."/>
            <person name="Yuan Y."/>
            <person name="Zhang Z."/>
            <person name="Adams C.Q."/>
            <person name="Ansari-Lari M.A."/>
            <person name="Ayele M."/>
            <person name="Brown M.J."/>
            <person name="Chen G."/>
            <person name="Chen Z."/>
            <person name="Clerc-Blankenburg K.P."/>
            <person name="Davis C."/>
            <person name="Delgado O."/>
            <person name="Dinh H.H."/>
            <person name="Draper H."/>
            <person name="Gonzalez-Garay M.L."/>
            <person name="Havlak P."/>
            <person name="Jackson L.R."/>
            <person name="Jacob L.S."/>
            <person name="Kelly S.H."/>
            <person name="Li L."/>
            <person name="Li Z."/>
            <person name="Liu J."/>
            <person name="Liu W."/>
            <person name="Lu J."/>
            <person name="Maheshwari M."/>
            <person name="Nguyen B.-V."/>
            <person name="Okwuonu G.O."/>
            <person name="Pasternak S."/>
            <person name="Perez L.M."/>
            <person name="Plopper F.J.H."/>
            <person name="Santibanez J."/>
            <person name="Shen H."/>
            <person name="Tabor P.E."/>
            <person name="Verduzco D."/>
            <person name="Waldron L."/>
            <person name="Wang Q."/>
            <person name="Williams G.A."/>
            <person name="Zhang J."/>
            <person name="Zhou J."/>
            <person name="Allen C.C."/>
            <person name="Amin A.G."/>
            <person name="Anyalebechi V."/>
            <person name="Bailey M."/>
            <person name="Barbaria J.A."/>
            <person name="Bimage K.E."/>
            <person name="Bryant N.P."/>
            <person name="Burch P.E."/>
            <person name="Burkett C.E."/>
            <person name="Burrell K.L."/>
            <person name="Calderon E."/>
            <person name="Cardenas V."/>
            <person name="Carter K."/>
            <person name="Casias K."/>
            <person name="Cavazos I."/>
            <person name="Cavazos S.R."/>
            <person name="Ceasar H."/>
            <person name="Chacko J."/>
            <person name="Chan S.N."/>
            <person name="Chavez D."/>
            <person name="Christopoulos C."/>
            <person name="Chu J."/>
            <person name="Cockrell R."/>
            <person name="Cox C.D."/>
            <person name="Dang M."/>
            <person name="Dathorne S.R."/>
            <person name="David R."/>
            <person name="Davis C.M."/>
            <person name="Davy-Carroll L."/>
            <person name="Deshazo D.R."/>
            <person name="Donlin J.E."/>
            <person name="D'Souza L."/>
            <person name="Eaves K.A."/>
            <person name="Egan A."/>
            <person name="Emery-Cohen A.J."/>
            <person name="Escotto M."/>
            <person name="Flagg N."/>
            <person name="Forbes L.D."/>
            <person name="Gabisi A.M."/>
            <person name="Garza M."/>
            <person name="Hamilton C."/>
            <person name="Henderson N."/>
            <person name="Hernandez O."/>
            <person name="Hines S."/>
            <person name="Hogues M.E."/>
            <person name="Huang M."/>
            <person name="Idlebird D.G."/>
            <person name="Johnson R."/>
            <person name="Jolivet A."/>
            <person name="Jones S."/>
            <person name="Kagan R."/>
            <person name="King L.M."/>
            <person name="Leal B."/>
            <person name="Lebow H."/>
            <person name="Lee S."/>
            <person name="LeVan J.M."/>
            <person name="Lewis L.C."/>
            <person name="London P."/>
            <person name="Lorensuhewa L.M."/>
            <person name="Loulseged H."/>
            <person name="Lovett D.A."/>
            <person name="Lucier A."/>
            <person name="Lucier R.L."/>
            <person name="Ma J."/>
            <person name="Madu R.C."/>
            <person name="Mapua P."/>
            <person name="Martindale A.D."/>
            <person name="Martinez E."/>
            <person name="Massey E."/>
            <person name="Mawhiney S."/>
            <person name="Meador M.G."/>
            <person name="Mendez S."/>
            <person name="Mercado C."/>
            <person name="Mercado I.C."/>
            <person name="Merritt C.E."/>
            <person name="Miner Z.L."/>
            <person name="Minja E."/>
            <person name="Mitchell T."/>
            <person name="Mohabbat F."/>
            <person name="Mohabbat K."/>
            <person name="Montgomery B."/>
            <person name="Moore N."/>
            <person name="Morris S."/>
            <person name="Munidasa M."/>
            <person name="Ngo R.N."/>
            <person name="Nguyen N.B."/>
            <person name="Nickerson E."/>
            <person name="Nwaokelemeh O.O."/>
            <person name="Nwokenkwo S."/>
            <person name="Obregon M."/>
            <person name="Oguh M."/>
            <person name="Oragunye N."/>
            <person name="Oviedo R.J."/>
            <person name="Parish B.J."/>
            <person name="Parker D.N."/>
            <person name="Parrish J."/>
            <person name="Parks K.L."/>
            <person name="Paul H.A."/>
            <person name="Payton B.A."/>
            <person name="Perez A."/>
            <person name="Perrin W."/>
            <person name="Pickens A."/>
            <person name="Primus E.L."/>
            <person name="Pu L.-L."/>
            <person name="Puazo M."/>
            <person name="Quiles M.M."/>
            <person name="Quiroz J.B."/>
            <person name="Rabata D."/>
            <person name="Reeves K."/>
            <person name="Ruiz S.J."/>
            <person name="Shao H."/>
            <person name="Sisson I."/>
            <person name="Sonaike T."/>
            <person name="Sorelle R.P."/>
            <person name="Sutton A.E."/>
            <person name="Svatek A.F."/>
            <person name="Svetz L.A."/>
            <person name="Tamerisa K.S."/>
            <person name="Taylor T.R."/>
            <person name="Teague B."/>
            <person name="Thomas N."/>
            <person name="Thorn R.D."/>
            <person name="Trejos Z.Y."/>
            <person name="Trevino B.K."/>
            <person name="Ukegbu O.N."/>
            <person name="Urban J.B."/>
            <person name="Vasquez L.I."/>
            <person name="Vera V.A."/>
            <person name="Villasana D.M."/>
            <person name="Wang L."/>
            <person name="Ward-Moore S."/>
            <person name="Warren J.T."/>
            <person name="Wei X."/>
            <person name="White F."/>
            <person name="Williamson A.L."/>
            <person name="Wleczyk R."/>
            <person name="Wooden H.S."/>
            <person name="Wooden S.H."/>
            <person name="Yen J."/>
            <person name="Yoon L."/>
            <person name="Yoon V."/>
            <person name="Zorrilla S.E."/>
            <person name="Nelson D."/>
            <person name="Kucherlapati R."/>
            <person name="Weinstock G."/>
            <person name="Gibbs R.A."/>
        </authorList>
    </citation>
    <scope>NUCLEOTIDE SEQUENCE [LARGE SCALE GENOMIC DNA]</scope>
</reference>
<reference key="9">
    <citation type="journal article" date="2004" name="Genome Res.">
        <title>The status, quality, and expansion of the NIH full-length cDNA project: the Mammalian Gene Collection (MGC).</title>
        <authorList>
            <consortium name="The MGC Project Team"/>
        </authorList>
    </citation>
    <scope>NUCLEOTIDE SEQUENCE [LARGE SCALE MRNA] (ISOFORM 1)</scope>
    <source>
        <tissue>Brain</tissue>
        <tissue>Lymph</tissue>
    </source>
</reference>
<reference key="10">
    <citation type="journal article" date="1985" name="Eur. J. Biochem.">
        <title>Mitochondrial aldehyde dehydrogenase from human liver. Primary structure, differences in relation to the cytosolic enzyme, and functional correlations.</title>
        <authorList>
            <person name="Hempel J."/>
            <person name="Kaiser R."/>
            <person name="Joernvall H."/>
        </authorList>
    </citation>
    <scope>PROTEIN SEQUENCE OF 18-517 (ISOFORM 1)</scope>
    <source>
        <tissue>Liver</tissue>
    </source>
</reference>
<reference key="11">
    <citation type="journal article" date="1985" name="Proc. Natl. Acad. Sci. U.S.A.">
        <title>Cloning of cDNAs for human aldehyde dehydrogenases 1 and 2.</title>
        <authorList>
            <person name="Hsu L.C."/>
            <person name="Tani K."/>
            <person name="Fujiyoshi T."/>
            <person name="Kurachi K."/>
            <person name="Yoshida A."/>
        </authorList>
    </citation>
    <scope>NUCLEOTIDE SEQUENCE [MRNA] OF 119-517 (ISOFORM 1)</scope>
    <source>
        <tissue>Liver</tissue>
    </source>
</reference>
<reference key="12">
    <citation type="journal article" date="1985" name="Alcohol">
        <title>Molecular abnormality and cDNA cloning of human aldehyde dehydrogenases.</title>
        <authorList>
            <person name="Yoshida A."/>
            <person name="Ikawa M."/>
            <person name="Hsu L.C."/>
            <person name="Tani K."/>
        </authorList>
    </citation>
    <scope>NUCLEOTIDE SEQUENCE [MRNA] OF 119-517 (ISOFORM 1)</scope>
</reference>
<reference key="13">
    <citation type="submission" date="2007-03" db="UniProtKB">
        <authorList>
            <person name="Lubec G."/>
            <person name="Vishwanath V."/>
        </authorList>
    </citation>
    <scope>PROTEIN SEQUENCE OF 160-172 AND 325-338</scope>
    <scope>IDENTIFICATION BY MASS SPECTROMETRY</scope>
    <source>
        <tissue>Brain</tissue>
        <tissue>Cajal-Retzius cell</tissue>
    </source>
</reference>
<reference key="14">
    <citation type="journal article" date="2004" name="Biochem. J.">
        <title>Vectorial proteomics reveal targeting, phosphorylation and specific fragmentation of polymerase I and transcript release factor (PTRF) at the surface of caveolae in human adipocytes.</title>
        <authorList>
            <person name="Aboulaich N."/>
            <person name="Vainonen J.P."/>
            <person name="Stralfors P."/>
            <person name="Vener A.V."/>
        </authorList>
    </citation>
    <scope>PROTEIN SEQUENCE OF 196-226 AND 325-338</scope>
    <source>
        <tissue>Adipocyte</tissue>
    </source>
</reference>
<reference key="15">
    <citation type="journal article" date="1987" name="Isozymes Curr. Top. Biol. Med. Res.">
        <title>Human aldehyde dehydrogenase isozymes and alcohol sensitivity.</title>
        <authorList>
            <person name="Agarwal D.P."/>
            <person name="Goedde H.W."/>
        </authorList>
    </citation>
    <scope>NUCLEOTIDE SEQUENCE [MRNA] OF 214-500</scope>
    <scope>VARIANT VAL-337</scope>
    <source>
        <tissue>Liver</tissue>
    </source>
</reference>
<reference key="16">
    <citation type="journal article" date="1987" name="FEBS Lett.">
        <title>Mitochondrial aldehyde dehydrogenase. Homology of putative targeting sequence to that of carbamyl phosphate synthetase I revealed by correlation of cDNA and protein data.</title>
        <authorList>
            <person name="Hempel J."/>
            <person name="Hoeoeg J.-O."/>
            <person name="Joernvall H."/>
        </authorList>
    </citation>
    <scope>DESCRIPTION OF ORIGIN OF CONFLICTS BETWEEN THE SEQUENCE DESCRIBED IN PUBMED:4065146 AND DNA SEQUENCES</scope>
</reference>
<reference key="17">
    <citation type="journal article" date="2011" name="BMC Syst. Biol.">
        <title>Initial characterization of the human central proteome.</title>
        <authorList>
            <person name="Burkard T.R."/>
            <person name="Planyavsky M."/>
            <person name="Kaupe I."/>
            <person name="Breitwieser F.P."/>
            <person name="Buerckstuemmer T."/>
            <person name="Bennett K.L."/>
            <person name="Superti-Furga G."/>
            <person name="Colinge J."/>
        </authorList>
    </citation>
    <scope>IDENTIFICATION BY MASS SPECTROMETRY [LARGE SCALE ANALYSIS]</scope>
</reference>
<reference key="18">
    <citation type="journal article" date="2014" name="J. Proteomics">
        <title>An enzyme assisted RP-RPLC approach for in-depth analysis of human liver phosphoproteome.</title>
        <authorList>
            <person name="Bian Y."/>
            <person name="Song C."/>
            <person name="Cheng K."/>
            <person name="Dong M."/>
            <person name="Wang F."/>
            <person name="Huang J."/>
            <person name="Sun D."/>
            <person name="Wang L."/>
            <person name="Ye M."/>
            <person name="Zou H."/>
        </authorList>
    </citation>
    <scope>IDENTIFICATION BY MASS SPECTROMETRY [LARGE SCALE ANALYSIS]</scope>
    <source>
        <tissue>Liver</tissue>
    </source>
</reference>
<reference key="19">
    <citation type="journal article" date="2024" name="Nature">
        <title>Stress response silencing by an E3 ligase mutated in neurodegeneration.</title>
        <authorList>
            <person name="Haakonsen D.L."/>
            <person name="Heider M."/>
            <person name="Ingersoll A.J."/>
            <person name="Vodehnal K."/>
            <person name="Witus S.R."/>
            <person name="Uenaka T."/>
            <person name="Wernig M."/>
            <person name="Rape M."/>
        </authorList>
    </citation>
    <scope>UBIQUITINATION</scope>
</reference>
<reference key="20">
    <citation type="journal article" date="1999" name="Protein Sci.">
        <title>Human liver mitochondrial aldehyde dehydrogenase: three-dimensional structure and the restoration of solubility and activity of chimeric forms.</title>
        <authorList>
            <person name="Ni L."/>
            <person name="Zhou J."/>
            <person name="Hurley T.D."/>
            <person name="Weiner H."/>
        </authorList>
    </citation>
    <scope>X-RAY CRYSTALLOGRAPHY (2.58 ANGSTROMS)</scope>
</reference>
<reference key="21">
    <citation type="journal article" date="1984" name="Proc. Natl. Acad. Sci. U.S.A.">
        <title>Molecular abnormality of an inactive aldehyde dehydrogenase variant commonly found in Orientals.</title>
        <authorList>
            <person name="Yoshida A."/>
            <person name="Huang I.-Y."/>
            <person name="Ikawa M."/>
        </authorList>
    </citation>
    <scope>VARIANT LYS-504</scope>
</reference>
<reference key="22">
    <citation type="journal article" date="1995" name="Alcohol. Clin. Exp. Res.">
        <title>Mitochondrial aldehyde dehydrogenase polymorphism in Asian and American Indian populations: detection of new ALDH2 alleles.</title>
        <authorList>
            <person name="Novoradovsky A."/>
            <person name="Tsai S.J."/>
            <person name="Goldfarb L."/>
            <person name="Peterson R."/>
            <person name="Long J.C."/>
            <person name="Goldman D."/>
        </authorList>
    </citation>
    <scope>VARIANT LYS-496</scope>
</reference>
<reference key="23">
    <citation type="journal article" date="2020" name="Sci. Adv.">
        <title>Digenic mutations in ALDH2 and ADH5 impair formaldehyde clearance and cause a multisystem disorder, AMeD syndrome.</title>
        <authorList>
            <person name="Oka Y."/>
            <person name="Hamada M."/>
            <person name="Nakazawa Y."/>
            <person name="Muramatsu H."/>
            <person name="Okuno Y."/>
            <person name="Higasa K."/>
            <person name="Shimada M."/>
            <person name="Takeshima H."/>
            <person name="Hanada K."/>
            <person name="Hirano T."/>
            <person name="Kawakita T."/>
            <person name="Sakaguchi H."/>
            <person name="Ichimura T."/>
            <person name="Ozono S."/>
            <person name="Yuge K."/>
            <person name="Watanabe Y."/>
            <person name="Kotani Y."/>
            <person name="Yamane M."/>
            <person name="Kasugai Y."/>
            <person name="Tanaka M."/>
            <person name="Suganami T."/>
            <person name="Nakada S."/>
            <person name="Mitsutake N."/>
            <person name="Hara Y."/>
            <person name="Kato K."/>
            <person name="Mizuno S."/>
            <person name="Miyake N."/>
            <person name="Kawai Y."/>
            <person name="Tokunaga K."/>
            <person name="Nagasaki M."/>
            <person name="Kito S."/>
            <person name="Isoyama K."/>
            <person name="Onodera M."/>
            <person name="Kaneko H."/>
            <person name="Matsumoto N."/>
            <person name="Matsuda F."/>
            <person name="Matsuo K."/>
            <person name="Takahashi Y."/>
            <person name="Mashimo T."/>
            <person name="Kojima S."/>
            <person name="Ogi T."/>
        </authorList>
    </citation>
    <scope>VARIANT AMEDS LYS-504</scope>
    <scope>INVOLVEMENT IN AMEDS</scope>
    <scope>FUNCTION</scope>
</reference>